<gene>
    <name evidence="9" type="primary">TSPAN33</name>
    <name type="synonym">PEN</name>
</gene>
<accession>Q86UF1</accession>
<proteinExistence type="evidence at protein level"/>
<feature type="chain" id="PRO_0000282922" description="Tetraspanin-33">
    <location>
        <begin position="1"/>
        <end position="283"/>
    </location>
</feature>
<feature type="topological domain" description="Cytoplasmic" evidence="3">
    <location>
        <begin position="1"/>
        <end position="24"/>
    </location>
</feature>
<feature type="transmembrane region" description="Helical" evidence="3">
    <location>
        <begin position="25"/>
        <end position="45"/>
    </location>
</feature>
<feature type="topological domain" description="Extracellular" evidence="3">
    <location>
        <begin position="46"/>
        <end position="64"/>
    </location>
</feature>
<feature type="transmembrane region" description="Helical" evidence="3">
    <location>
        <begin position="65"/>
        <end position="85"/>
    </location>
</feature>
<feature type="topological domain" description="Cytoplasmic" evidence="3">
    <location>
        <begin position="86"/>
        <end position="96"/>
    </location>
</feature>
<feature type="transmembrane region" description="Helical" evidence="3">
    <location>
        <begin position="97"/>
        <end position="117"/>
    </location>
</feature>
<feature type="topological domain" description="Extracellular" evidence="3">
    <location>
        <begin position="118"/>
        <end position="235"/>
    </location>
</feature>
<feature type="transmembrane region" description="Helical" evidence="3">
    <location>
        <begin position="236"/>
        <end position="256"/>
    </location>
</feature>
<feature type="topological domain" description="Cytoplasmic" evidence="3">
    <location>
        <begin position="257"/>
        <end position="283"/>
    </location>
</feature>
<feature type="glycosylation site" description="N-linked (GlcNAc...) asparagine" evidence="3">
    <location>
        <position position="172"/>
    </location>
</feature>
<feature type="disulfide bond" evidence="1">
    <location>
        <begin position="156"/>
        <end position="224"/>
    </location>
</feature>
<feature type="disulfide bond" evidence="1">
    <location>
        <begin position="157"/>
        <end position="189"/>
    </location>
</feature>
<feature type="disulfide bond" evidence="1">
    <location>
        <begin position="173"/>
        <end position="183"/>
    </location>
</feature>
<feature type="disulfide bond" evidence="1">
    <location>
        <begin position="190"/>
        <end position="203"/>
    </location>
</feature>
<dbReference type="EMBL" id="BC044244">
    <property type="protein sequence ID" value="AAH44244.1"/>
    <property type="molecule type" value="mRNA"/>
</dbReference>
<dbReference type="EMBL" id="AY236849">
    <property type="protein sequence ID" value="AAO91940.1"/>
    <property type="molecule type" value="mRNA"/>
</dbReference>
<dbReference type="EMBL" id="AF276891">
    <property type="protein sequence ID" value="AAQ14314.1"/>
    <property type="molecule type" value="mRNA"/>
</dbReference>
<dbReference type="CCDS" id="CCDS5810.1"/>
<dbReference type="RefSeq" id="NP_848657.1">
    <property type="nucleotide sequence ID" value="NM_178562.5"/>
</dbReference>
<dbReference type="SMR" id="Q86UF1"/>
<dbReference type="BioGRID" id="131040">
    <property type="interactions" value="67"/>
</dbReference>
<dbReference type="FunCoup" id="Q86UF1">
    <property type="interactions" value="69"/>
</dbReference>
<dbReference type="IntAct" id="Q86UF1">
    <property type="interactions" value="65"/>
</dbReference>
<dbReference type="MINT" id="Q86UF1"/>
<dbReference type="STRING" id="9606.ENSP00000483872"/>
<dbReference type="TCDB" id="8.A.40.1.11">
    <property type="family name" value="the tetraspanin (tetraspanin) family"/>
</dbReference>
<dbReference type="GlyCosmos" id="Q86UF1">
    <property type="glycosylation" value="1 site, No reported glycans"/>
</dbReference>
<dbReference type="GlyGen" id="Q86UF1">
    <property type="glycosylation" value="1 site, 1 N-linked glycan (1 site)"/>
</dbReference>
<dbReference type="iPTMnet" id="Q86UF1"/>
<dbReference type="PhosphoSitePlus" id="Q86UF1"/>
<dbReference type="SwissPalm" id="Q86UF1"/>
<dbReference type="BioMuta" id="TSPAN33"/>
<dbReference type="DMDM" id="74727485"/>
<dbReference type="jPOST" id="Q86UF1"/>
<dbReference type="MassIVE" id="Q86UF1"/>
<dbReference type="PaxDb" id="9606-ENSP00000483872"/>
<dbReference type="PeptideAtlas" id="Q86UF1"/>
<dbReference type="ProteomicsDB" id="69814"/>
<dbReference type="Pumba" id="Q86UF1"/>
<dbReference type="Antibodypedia" id="17866">
    <property type="antibodies" value="206 antibodies from 26 providers"/>
</dbReference>
<dbReference type="DNASU" id="340348"/>
<dbReference type="Ensembl" id="ENST00000486685.3">
    <property type="protein sequence ID" value="ENSP00000483872.1"/>
    <property type="gene ID" value="ENSG00000158457.6"/>
</dbReference>
<dbReference type="GeneID" id="340348"/>
<dbReference type="KEGG" id="hsa:340348"/>
<dbReference type="MANE-Select" id="ENST00000486685.3">
    <property type="protein sequence ID" value="ENSP00000483872.1"/>
    <property type="RefSeq nucleotide sequence ID" value="NM_178562.5"/>
    <property type="RefSeq protein sequence ID" value="NP_848657.1"/>
</dbReference>
<dbReference type="UCSC" id="uc033ahb.2">
    <property type="organism name" value="human"/>
</dbReference>
<dbReference type="AGR" id="HGNC:28743"/>
<dbReference type="CTD" id="340348"/>
<dbReference type="DisGeNET" id="340348"/>
<dbReference type="GeneCards" id="TSPAN33"/>
<dbReference type="HGNC" id="HGNC:28743">
    <property type="gene designation" value="TSPAN33"/>
</dbReference>
<dbReference type="HPA" id="ENSG00000158457">
    <property type="expression patterns" value="Tissue enhanced (kidney)"/>
</dbReference>
<dbReference type="MIM" id="610120">
    <property type="type" value="gene"/>
</dbReference>
<dbReference type="neXtProt" id="NX_Q86UF1"/>
<dbReference type="OpenTargets" id="ENSG00000158457"/>
<dbReference type="PharmGKB" id="PA142670690"/>
<dbReference type="VEuPathDB" id="HostDB:ENSG00000158457"/>
<dbReference type="eggNOG" id="KOG3882">
    <property type="taxonomic scope" value="Eukaryota"/>
</dbReference>
<dbReference type="GeneTree" id="ENSGT00940000159484"/>
<dbReference type="HOGENOM" id="CLU_055524_0_3_1"/>
<dbReference type="InParanoid" id="Q86UF1"/>
<dbReference type="OMA" id="IQTYRED"/>
<dbReference type="OrthoDB" id="2014092at2759"/>
<dbReference type="PAN-GO" id="Q86UF1">
    <property type="GO annotations" value="3 GO annotations based on evolutionary models"/>
</dbReference>
<dbReference type="PhylomeDB" id="Q86UF1"/>
<dbReference type="TreeFam" id="TF313002"/>
<dbReference type="PathwayCommons" id="Q86UF1"/>
<dbReference type="Reactome" id="R-HSA-977225">
    <property type="pathway name" value="Amyloid fiber formation"/>
</dbReference>
<dbReference type="SignaLink" id="Q86UF1"/>
<dbReference type="SIGNOR" id="Q86UF1"/>
<dbReference type="BioGRID-ORCS" id="340348">
    <property type="hits" value="16 hits in 1145 CRISPR screens"/>
</dbReference>
<dbReference type="GenomeRNAi" id="340348"/>
<dbReference type="Pharos" id="Q86UF1">
    <property type="development level" value="Tbio"/>
</dbReference>
<dbReference type="PRO" id="PR:Q86UF1"/>
<dbReference type="Proteomes" id="UP000005640">
    <property type="component" value="Chromosome 7"/>
</dbReference>
<dbReference type="RNAct" id="Q86UF1">
    <property type="molecule type" value="protein"/>
</dbReference>
<dbReference type="Bgee" id="ENSG00000158457">
    <property type="expression patterns" value="Expressed in kidney epithelium and 175 other cell types or tissues"/>
</dbReference>
<dbReference type="GO" id="GO:0005912">
    <property type="term" value="C:adherens junction"/>
    <property type="evidence" value="ECO:0007669"/>
    <property type="project" value="UniProtKB-SubCell"/>
</dbReference>
<dbReference type="GO" id="GO:0009986">
    <property type="term" value="C:cell surface"/>
    <property type="evidence" value="ECO:0007669"/>
    <property type="project" value="Ensembl"/>
</dbReference>
<dbReference type="GO" id="GO:0005788">
    <property type="term" value="C:endoplasmic reticulum lumen"/>
    <property type="evidence" value="ECO:0000304"/>
    <property type="project" value="Reactome"/>
</dbReference>
<dbReference type="GO" id="GO:0005886">
    <property type="term" value="C:plasma membrane"/>
    <property type="evidence" value="ECO:0000314"/>
    <property type="project" value="UniProtKB"/>
</dbReference>
<dbReference type="GO" id="GO:0046930">
    <property type="term" value="C:pore complex"/>
    <property type="evidence" value="ECO:0000315"/>
    <property type="project" value="UniProtKB"/>
</dbReference>
<dbReference type="GO" id="GO:0097197">
    <property type="term" value="C:tetraspanin-enriched microdomain"/>
    <property type="evidence" value="ECO:0007669"/>
    <property type="project" value="Ensembl"/>
</dbReference>
<dbReference type="GO" id="GO:0019899">
    <property type="term" value="F:enzyme binding"/>
    <property type="evidence" value="ECO:0000353"/>
    <property type="project" value="UniProtKB"/>
</dbReference>
<dbReference type="GO" id="GO:0046931">
    <property type="term" value="P:pore complex assembly"/>
    <property type="evidence" value="ECO:0000315"/>
    <property type="project" value="UniProtKB"/>
</dbReference>
<dbReference type="GO" id="GO:0072659">
    <property type="term" value="P:protein localization to plasma membrane"/>
    <property type="evidence" value="ECO:0000314"/>
    <property type="project" value="UniProtKB"/>
</dbReference>
<dbReference type="GO" id="GO:0051604">
    <property type="term" value="P:protein maturation"/>
    <property type="evidence" value="ECO:0000314"/>
    <property type="project" value="UniProtKB"/>
</dbReference>
<dbReference type="CDD" id="cd03158">
    <property type="entry name" value="penumbra_like_LEL"/>
    <property type="match status" value="1"/>
</dbReference>
<dbReference type="FunFam" id="1.10.1450.10:FF:000007">
    <property type="entry name" value="Tetraspanin"/>
    <property type="match status" value="1"/>
</dbReference>
<dbReference type="Gene3D" id="1.10.1450.10">
    <property type="entry name" value="Tetraspanin"/>
    <property type="match status" value="1"/>
</dbReference>
<dbReference type="InterPro" id="IPR018499">
    <property type="entry name" value="Tetraspanin/Peripherin"/>
</dbReference>
<dbReference type="InterPro" id="IPR000301">
    <property type="entry name" value="Tetraspanin_animals"/>
</dbReference>
<dbReference type="InterPro" id="IPR008952">
    <property type="entry name" value="Tetraspanin_EC2_sf"/>
</dbReference>
<dbReference type="PANTHER" id="PTHR19282">
    <property type="entry name" value="TETRASPANIN"/>
    <property type="match status" value="1"/>
</dbReference>
<dbReference type="PANTHER" id="PTHR19282:SF154">
    <property type="entry name" value="TETRASPANIN-33"/>
    <property type="match status" value="1"/>
</dbReference>
<dbReference type="Pfam" id="PF00335">
    <property type="entry name" value="Tetraspanin"/>
    <property type="match status" value="1"/>
</dbReference>
<dbReference type="PIRSF" id="PIRSF002419">
    <property type="entry name" value="Tetraspanin"/>
    <property type="match status" value="1"/>
</dbReference>
<dbReference type="PRINTS" id="PR00259">
    <property type="entry name" value="TMFOUR"/>
</dbReference>
<dbReference type="SUPFAM" id="SSF48652">
    <property type="entry name" value="Tetraspanin"/>
    <property type="match status" value="1"/>
</dbReference>
<comment type="function">
    <text evidence="2 5 6 7">Part of TspanC8 subgroup, composed of 6 members that interact with the transmembrane metalloprotease ADAM10. This interaction is required for ADAM10 exit from the endoplasmic reticulum and for enzymatic maturation and trafficking to the cell surface as well as substrate specificity. Different TspanC8/ADAM10 complexes have distinct substrates (PubMed:26686862, PubMed:30463011, PubMed:37516108). Plays an important role in normal erythropoiesis (By similarity). It has a role in the differentiation of erythroid progenitors (By similarity). Negatively regulates ligand-induced Notch activity probably by regulating ADAM10 activity (PubMed:26686862). Mediates docking of ADAM10 to zonula adherens by interacting with ADAM10 and, in a PDZD11-dependent manner, with the zonula adherens protein PLEKHA7 (PubMed:30463011).</text>
</comment>
<comment type="subunit">
    <text evidence="4 5 6">Homodimer; disulfide-linked (PubMed:17158226). Interacts (via extracellular domain) with ADAM10 (via extracellular domain) (PubMed:26686862, PubMed:30463011). Interacts (via cytoplasmic domain) with PLEKHA7 (via WW domains); the interaction is dependent on PDZD11 being bound to PLEKHA7 and facilitates the docking of ADAM10 to zonula adherens (PubMed:30463011).</text>
</comment>
<comment type="interaction">
    <interactant intactId="EBI-12045841">
        <id>Q86UF1</id>
    </interactant>
    <interactant intactId="EBI-1536151">
        <id>O14672</id>
        <label>ADAM10</label>
    </interactant>
    <organismsDiffer>false</organismsDiffer>
    <experiments>3</experiments>
</comment>
<comment type="interaction">
    <interactant intactId="EBI-12045841">
        <id>Q86UF1</id>
    </interactant>
    <interactant intactId="EBI-1045797">
        <id>Q8N5K1</id>
        <label>CISD2</label>
    </interactant>
    <organismsDiffer>false</organismsDiffer>
    <experiments>3</experiments>
</comment>
<comment type="interaction">
    <interactant intactId="EBI-12045841">
        <id>Q86UF1</id>
    </interactant>
    <interactant intactId="EBI-740744">
        <id>O95471</id>
        <label>CLDN7</label>
    </interactant>
    <organismsDiffer>false</organismsDiffer>
    <experiments>3</experiments>
</comment>
<comment type="interaction">
    <interactant intactId="EBI-12045841">
        <id>Q86UF1</id>
    </interactant>
    <interactant intactId="EBI-724524">
        <id>O75208</id>
        <label>COQ9</label>
    </interactant>
    <organismsDiffer>false</organismsDiffer>
    <experiments>3</experiments>
</comment>
<comment type="interaction">
    <interactant intactId="EBI-12045841">
        <id>Q86UF1</id>
    </interactant>
    <interactant intactId="EBI-3917045">
        <id>Q6PI48</id>
        <label>DARS2</label>
    </interactant>
    <organismsDiffer>false</organismsDiffer>
    <experiments>3</experiments>
</comment>
<comment type="interaction">
    <interactant intactId="EBI-12045841">
        <id>Q86UF1</id>
    </interactant>
    <interactant intactId="EBI-781551">
        <id>Q9Y282</id>
        <label>ERGIC3</label>
    </interactant>
    <organismsDiffer>false</organismsDiffer>
    <experiments>3</experiments>
</comment>
<comment type="interaction">
    <interactant intactId="EBI-12045841">
        <id>Q86UF1</id>
    </interactant>
    <interactant intactId="EBI-18304435">
        <id>Q5JX71</id>
        <label>FAM209A</label>
    </interactant>
    <organismsDiffer>false</organismsDiffer>
    <experiments>3</experiments>
</comment>
<comment type="interaction">
    <interactant intactId="EBI-12045841">
        <id>Q86UF1</id>
    </interactant>
    <interactant intactId="EBI-9304251">
        <id>Q05329</id>
        <label>GAD2</label>
    </interactant>
    <organismsDiffer>false</organismsDiffer>
    <experiments>3</experiments>
</comment>
<comment type="interaction">
    <interactant intactId="EBI-12045841">
        <id>Q86UF1</id>
    </interactant>
    <interactant intactId="EBI-17458373">
        <id>P48165</id>
        <label>GJA8</label>
    </interactant>
    <organismsDiffer>false</organismsDiffer>
    <experiments>3</experiments>
</comment>
<comment type="interaction">
    <interactant intactId="EBI-12045841">
        <id>Q86UF1</id>
    </interactant>
    <interactant intactId="EBI-3917143">
        <id>Q5T7V8</id>
        <label>GORAB</label>
    </interactant>
    <organismsDiffer>false</organismsDiffer>
    <experiments>3</experiments>
</comment>
<comment type="interaction">
    <interactant intactId="EBI-12045841">
        <id>Q86UF1</id>
    </interactant>
    <interactant intactId="EBI-13345167">
        <id>Q8TDT2</id>
        <label>GPR152</label>
    </interactant>
    <organismsDiffer>false</organismsDiffer>
    <experiments>3</experiments>
</comment>
<comment type="interaction">
    <interactant intactId="EBI-12045841">
        <id>Q86UF1</id>
    </interactant>
    <interactant intactId="EBI-11721746">
        <id>Q8TED1</id>
        <label>GPX8</label>
    </interactant>
    <organismsDiffer>false</organismsDiffer>
    <experiments>3</experiments>
</comment>
<comment type="interaction">
    <interactant intactId="EBI-12045841">
        <id>Q86UF1</id>
    </interactant>
    <interactant intactId="EBI-3934936">
        <id>O95279</id>
        <label>KCNK5</label>
    </interactant>
    <organismsDiffer>false</organismsDiffer>
    <experiments>3</experiments>
</comment>
<comment type="interaction">
    <interactant intactId="EBI-12045841">
        <id>Q86UF1</id>
    </interactant>
    <interactant intactId="EBI-2432309">
        <id>Q92876</id>
        <label>KLK6</label>
    </interactant>
    <organismsDiffer>false</organismsDiffer>
    <experiments>3</experiments>
</comment>
<comment type="interaction">
    <interactant intactId="EBI-12045841">
        <id>Q86UF1</id>
    </interactant>
    <interactant intactId="EBI-2820517">
        <id>Q8TAF8</id>
        <label>LHFPL5</label>
    </interactant>
    <organismsDiffer>false</organismsDiffer>
    <experiments>3</experiments>
</comment>
<comment type="interaction">
    <interactant intactId="EBI-12045841">
        <id>Q86UF1</id>
    </interactant>
    <interactant intactId="EBI-11956541">
        <id>Q9GZY8-5</id>
        <label>MFF</label>
    </interactant>
    <organismsDiffer>false</organismsDiffer>
    <experiments>3</experiments>
</comment>
<comment type="interaction">
    <interactant intactId="EBI-12045841">
        <id>Q86UF1</id>
    </interactant>
    <interactant intactId="EBI-724754">
        <id>O14880</id>
        <label>MGST3</label>
    </interactant>
    <organismsDiffer>false</organismsDiffer>
    <experiments>3</experiments>
</comment>
<comment type="interaction">
    <interactant intactId="EBI-12045841">
        <id>Q86UF1</id>
    </interactant>
    <interactant intactId="EBI-3923617">
        <id>Q9H2K0</id>
        <label>MTIF3</label>
    </interactant>
    <organismsDiffer>false</organismsDiffer>
    <experiments>3</experiments>
</comment>
<comment type="interaction">
    <interactant intactId="EBI-12045841">
        <id>Q86UF1</id>
    </interactant>
    <interactant intactId="EBI-10969203">
        <id>O14524-2</id>
        <label>NEMP1</label>
    </interactant>
    <organismsDiffer>false</organismsDiffer>
    <experiments>3</experiments>
</comment>
<comment type="interaction">
    <interactant intactId="EBI-12045841">
        <id>Q86UF1</id>
    </interactant>
    <interactant intactId="EBI-949945">
        <id>Q53GL0</id>
        <label>PLEKHO1</label>
    </interactant>
    <organismsDiffer>false</organismsDiffer>
    <experiments>3</experiments>
</comment>
<comment type="interaction">
    <interactant intactId="EBI-12045841">
        <id>Q86UF1</id>
    </interactant>
    <interactant intactId="EBI-10269209">
        <id>Q8NC24</id>
        <label>RELL2</label>
    </interactant>
    <organismsDiffer>false</organismsDiffer>
    <experiments>3</experiments>
</comment>
<comment type="interaction">
    <interactant intactId="EBI-12045841">
        <id>Q86UF1</id>
    </interactant>
    <interactant intactId="EBI-18035902">
        <id>Q96DD7</id>
        <label>SHISA4</label>
    </interactant>
    <organismsDiffer>false</organismsDiffer>
    <experiments>3</experiments>
</comment>
<comment type="interaction">
    <interactant intactId="EBI-12045841">
        <id>Q86UF1</id>
    </interactant>
    <interactant intactId="EBI-6977215">
        <id>Q9Y3P8</id>
        <label>SIT1</label>
    </interactant>
    <organismsDiffer>false</organismsDiffer>
    <experiments>3</experiments>
</comment>
<comment type="interaction">
    <interactant intactId="EBI-12045841">
        <id>Q86UF1</id>
    </interactant>
    <interactant intactId="EBI-17295964">
        <id>Q9NQQ7-3</id>
        <label>SLC35C2</label>
    </interactant>
    <organismsDiffer>false</organismsDiffer>
    <experiments>3</experiments>
</comment>
<comment type="interaction">
    <interactant intactId="EBI-12045841">
        <id>Q86UF1</id>
    </interactant>
    <interactant intactId="EBI-12078338">
        <id>O43278-2</id>
        <label>SPINT1</label>
    </interactant>
    <organismsDiffer>false</organismsDiffer>
    <experiments>3</experiments>
</comment>
<comment type="interaction">
    <interactant intactId="EBI-12045841">
        <id>Q86UF1</id>
    </interactant>
    <interactant intactId="EBI-2821497">
        <id>Q9BVX2</id>
        <label>TMEM106C</label>
    </interactant>
    <organismsDiffer>false</organismsDiffer>
    <experiments>4</experiments>
</comment>
<comment type="interaction">
    <interactant intactId="EBI-12045841">
        <id>Q86UF1</id>
    </interactant>
    <interactant intactId="EBI-3923061">
        <id>Q96B21</id>
        <label>TMEM45B</label>
    </interactant>
    <organismsDiffer>false</organismsDiffer>
    <experiments>3</experiments>
</comment>
<comment type="subcellular location">
    <subcellularLocation>
        <location evidence="5">Cell membrane</location>
        <topology evidence="8">Multi-pass membrane protein</topology>
    </subcellularLocation>
    <subcellularLocation>
        <location evidence="6">Cell junction</location>
        <location evidence="6">Adherens junction</location>
    </subcellularLocation>
    <subcellularLocation>
        <location evidence="6">Cytoplasm</location>
    </subcellularLocation>
    <text evidence="6">Is localized to zonula adherens by PLEKHA7 by a PDZD11-dependent interaction.</text>
</comment>
<comment type="tissue specificity">
    <text evidence="4">Predominantly expressed in erythroblasts.</text>
</comment>
<comment type="similarity">
    <text evidence="8">Belongs to the tetraspanin (TM4SF) family.</text>
</comment>
<name>TSN33_HUMAN</name>
<reference key="1">
    <citation type="journal article" date="2005" name="Cancer Genet. Cytogenet.">
        <title>The human Penumbra gene is mapped to a region on chromosome 7 frequently deleted in myeloid malignancies.</title>
        <authorList>
            <person name="Chen Z."/>
            <person name="Pasquini M."/>
            <person name="Hong B."/>
            <person name="DeHart S."/>
            <person name="Heikens M."/>
            <person name="Tsai S."/>
        </authorList>
    </citation>
    <scope>NUCLEOTIDE SEQUENCE [MRNA]</scope>
    <source>
        <tissue>Bone marrow</tissue>
    </source>
</reference>
<reference key="2">
    <citation type="journal article" date="2007" name="Blood">
        <title>Penumbra encodes a novel tetraspanin that is highly expressed in erythroid progenitors and promotes effective erythropoiesis.</title>
        <authorList>
            <person name="Heikens M.J."/>
            <person name="Cao T.M."/>
            <person name="Morita C."/>
            <person name="Dehart S.L."/>
            <person name="Tsai S."/>
        </authorList>
    </citation>
    <scope>NUCLEOTIDE SEQUENCE [MRNA]</scope>
    <scope>SUBUNIT</scope>
    <scope>TISSUE SPECIFICITY</scope>
</reference>
<reference key="3">
    <citation type="journal article" date="2004" name="Genome Res.">
        <title>The status, quality, and expansion of the NIH full-length cDNA project: the Mammalian Gene Collection (MGC).</title>
        <authorList>
            <consortium name="The MGC Project Team"/>
        </authorList>
    </citation>
    <scope>NUCLEOTIDE SEQUENCE [LARGE SCALE MRNA]</scope>
    <source>
        <tissue>Colon</tissue>
    </source>
</reference>
<reference key="4">
    <citation type="journal article" date="2016" name="Cell. Mol. Life Sci.">
        <title>TspanC8 tetraspanins differentially regulate the cleavage of ADAM10 substrates, Notch activation and ADAM10 membrane compartmentalization.</title>
        <authorList>
            <person name="Jouannet S."/>
            <person name="Saint-Pol J."/>
            <person name="Fernandez L."/>
            <person name="Nguyen V."/>
            <person name="Charrin S."/>
            <person name="Boucheix C."/>
            <person name="Brou C."/>
            <person name="Milhiet P.E."/>
            <person name="Rubinstein E."/>
        </authorList>
    </citation>
    <scope>FUNCTION</scope>
    <scope>INTERACTION WITH ADAM10</scope>
    <scope>SUBCELLULAR LOCATION</scope>
</reference>
<reference key="5">
    <citation type="journal article" date="2018" name="Cell Rep.">
        <title>A Dock-and-Lock Mechanism Clusters ADAM10 at Cell-Cell Junctions to Promote alpha-Toxin Cytotoxicity.</title>
        <authorList>
            <person name="Shah J."/>
            <person name="Rouaud F."/>
            <person name="Guerrera D."/>
            <person name="Vasileva E."/>
            <person name="Popov L.M."/>
            <person name="Kelley W.L."/>
            <person name="Rubinstein E."/>
            <person name="Carette J.E."/>
            <person name="Amieva M.R."/>
            <person name="Citi S."/>
        </authorList>
    </citation>
    <scope>FUNCTION</scope>
    <scope>SUBCELLULAR LOCATION</scope>
    <scope>INTERACTION WITH ADAM10 AND PLEKHA7</scope>
</reference>
<reference key="6">
    <citation type="journal article" date="2023" name="Cell">
        <title>Structural basis for membrane-proximal proteolysis of substrates by ADAM10.</title>
        <authorList>
            <person name="Lipper C.H."/>
            <person name="Egan E.D."/>
            <person name="Gabriel K.H."/>
            <person name="Blacklow S.C."/>
        </authorList>
    </citation>
    <scope>FUNCTION</scope>
</reference>
<keyword id="KW-0965">Cell junction</keyword>
<keyword id="KW-1003">Cell membrane</keyword>
<keyword id="KW-0963">Cytoplasm</keyword>
<keyword id="KW-1015">Disulfide bond</keyword>
<keyword id="KW-0325">Glycoprotein</keyword>
<keyword id="KW-0472">Membrane</keyword>
<keyword id="KW-1267">Proteomics identification</keyword>
<keyword id="KW-1185">Reference proteome</keyword>
<keyword id="KW-0812">Transmembrane</keyword>
<keyword id="KW-1133">Transmembrane helix</keyword>
<protein>
    <recommendedName>
        <fullName>Tetraspanin-33</fullName>
        <shortName>Tspan-33</shortName>
    </recommendedName>
    <alternativeName>
        <fullName>Penumbra</fullName>
        <shortName>hPen</shortName>
    </alternativeName>
    <alternativeName>
        <fullName>Proerythroblast new membrane</fullName>
    </alternativeName>
</protein>
<organism>
    <name type="scientific">Homo sapiens</name>
    <name type="common">Human</name>
    <dbReference type="NCBI Taxonomy" id="9606"/>
    <lineage>
        <taxon>Eukaryota</taxon>
        <taxon>Metazoa</taxon>
        <taxon>Chordata</taxon>
        <taxon>Craniata</taxon>
        <taxon>Vertebrata</taxon>
        <taxon>Euteleostomi</taxon>
        <taxon>Mammalia</taxon>
        <taxon>Eutheria</taxon>
        <taxon>Euarchontoglires</taxon>
        <taxon>Primates</taxon>
        <taxon>Haplorrhini</taxon>
        <taxon>Catarrhini</taxon>
        <taxon>Hominidae</taxon>
        <taxon>Homo</taxon>
    </lineage>
</organism>
<sequence>MARRPRAPAASGEEFSFVSPLVKYLLFFFNMLFWVISMVMVAVGVYARLMKHAEAALACLAVDPAILLIVVGVLMFLLTFCGCIGSLRENICLLQTFSLCLTAVFLLQLAAGILGFVFSDKARGKVSEIINNAIVHYRDDLDLQNLIDFGQKKFSCCGGISYKDWSQNMYFNCSEDNPSRERCSVPYSCCLPTPDQAVINTMCGQGMQAFDYLEASKVIYTNGCIDKLVNWIHSNLFLLGGVALGLAIPQLVGILLSQILVNQIKDQIKLQLYNQQHRADPWY</sequence>
<evidence type="ECO:0000250" key="1">
    <source>
        <dbReference type="UniProtKB" id="O95858"/>
    </source>
</evidence>
<evidence type="ECO:0000250" key="2">
    <source>
        <dbReference type="UniProtKB" id="Q8R3S2"/>
    </source>
</evidence>
<evidence type="ECO:0000255" key="3"/>
<evidence type="ECO:0000269" key="4">
    <source>
    </source>
</evidence>
<evidence type="ECO:0000269" key="5">
    <source>
    </source>
</evidence>
<evidence type="ECO:0000269" key="6">
    <source>
    </source>
</evidence>
<evidence type="ECO:0000269" key="7">
    <source>
    </source>
</evidence>
<evidence type="ECO:0000305" key="8"/>
<evidence type="ECO:0000312" key="9">
    <source>
        <dbReference type="HGNC" id="HGNC:28743"/>
    </source>
</evidence>